<accession>B8CQJ1</accession>
<organism>
    <name type="scientific">Shewanella piezotolerans (strain WP3 / JCM 13877)</name>
    <dbReference type="NCBI Taxonomy" id="225849"/>
    <lineage>
        <taxon>Bacteria</taxon>
        <taxon>Pseudomonadati</taxon>
        <taxon>Pseudomonadota</taxon>
        <taxon>Gammaproteobacteria</taxon>
        <taxon>Alteromonadales</taxon>
        <taxon>Shewanellaceae</taxon>
        <taxon>Shewanella</taxon>
    </lineage>
</organism>
<protein>
    <recommendedName>
        <fullName evidence="1">Holo-[acyl-carrier-protein] synthase</fullName>
        <shortName evidence="1">Holo-ACP synthase</shortName>
        <ecNumber evidence="1">2.7.8.7</ecNumber>
    </recommendedName>
    <alternativeName>
        <fullName evidence="1">4'-phosphopantetheinyl transferase AcpS</fullName>
    </alternativeName>
</protein>
<gene>
    <name evidence="1" type="primary">acpS</name>
    <name type="ordered locus">swp_3776</name>
</gene>
<dbReference type="EC" id="2.7.8.7" evidence="1"/>
<dbReference type="EMBL" id="CP000472">
    <property type="protein sequence ID" value="ACJ30457.1"/>
    <property type="molecule type" value="Genomic_DNA"/>
</dbReference>
<dbReference type="RefSeq" id="WP_020913801.1">
    <property type="nucleotide sequence ID" value="NC_011566.1"/>
</dbReference>
<dbReference type="SMR" id="B8CQJ1"/>
<dbReference type="STRING" id="225849.swp_3776"/>
<dbReference type="KEGG" id="swp:swp_3776"/>
<dbReference type="eggNOG" id="COG0736">
    <property type="taxonomic scope" value="Bacteria"/>
</dbReference>
<dbReference type="HOGENOM" id="CLU_089696_3_1_6"/>
<dbReference type="OrthoDB" id="517356at2"/>
<dbReference type="Proteomes" id="UP000000753">
    <property type="component" value="Chromosome"/>
</dbReference>
<dbReference type="GO" id="GO:0005737">
    <property type="term" value="C:cytoplasm"/>
    <property type="evidence" value="ECO:0007669"/>
    <property type="project" value="UniProtKB-SubCell"/>
</dbReference>
<dbReference type="GO" id="GO:0008897">
    <property type="term" value="F:holo-[acyl-carrier-protein] synthase activity"/>
    <property type="evidence" value="ECO:0007669"/>
    <property type="project" value="UniProtKB-UniRule"/>
</dbReference>
<dbReference type="GO" id="GO:0000287">
    <property type="term" value="F:magnesium ion binding"/>
    <property type="evidence" value="ECO:0007669"/>
    <property type="project" value="UniProtKB-UniRule"/>
</dbReference>
<dbReference type="GO" id="GO:0006633">
    <property type="term" value="P:fatty acid biosynthetic process"/>
    <property type="evidence" value="ECO:0007669"/>
    <property type="project" value="UniProtKB-UniRule"/>
</dbReference>
<dbReference type="FunFam" id="3.90.470.20:FF:000001">
    <property type="entry name" value="Holo-[acyl-carrier-protein] synthase"/>
    <property type="match status" value="1"/>
</dbReference>
<dbReference type="Gene3D" id="3.90.470.20">
    <property type="entry name" value="4'-phosphopantetheinyl transferase domain"/>
    <property type="match status" value="1"/>
</dbReference>
<dbReference type="HAMAP" id="MF_00101">
    <property type="entry name" value="AcpS"/>
    <property type="match status" value="1"/>
</dbReference>
<dbReference type="InterPro" id="IPR008278">
    <property type="entry name" value="4-PPantetheinyl_Trfase_dom"/>
</dbReference>
<dbReference type="InterPro" id="IPR037143">
    <property type="entry name" value="4-PPantetheinyl_Trfase_dom_sf"/>
</dbReference>
<dbReference type="InterPro" id="IPR002582">
    <property type="entry name" value="ACPS"/>
</dbReference>
<dbReference type="InterPro" id="IPR004568">
    <property type="entry name" value="Ppantetheine-prot_Trfase_dom"/>
</dbReference>
<dbReference type="NCBIfam" id="TIGR00516">
    <property type="entry name" value="acpS"/>
    <property type="match status" value="1"/>
</dbReference>
<dbReference type="NCBIfam" id="TIGR00556">
    <property type="entry name" value="pantethn_trn"/>
    <property type="match status" value="1"/>
</dbReference>
<dbReference type="Pfam" id="PF01648">
    <property type="entry name" value="ACPS"/>
    <property type="match status" value="1"/>
</dbReference>
<dbReference type="SUPFAM" id="SSF56214">
    <property type="entry name" value="4'-phosphopantetheinyl transferase"/>
    <property type="match status" value="1"/>
</dbReference>
<sequence>MIVGLGTDIVEIARIETRISEVVEKELQTNRLAKRVLTPSELDIFIKSSNPGRYLAKRFAAKEAAAKALGTGIGRGVSFQHIEISNNENGAPIVTFSAGAAERLAALGGVKGHLSIADEKHYATATVILES</sequence>
<keyword id="KW-0963">Cytoplasm</keyword>
<keyword id="KW-0275">Fatty acid biosynthesis</keyword>
<keyword id="KW-0276">Fatty acid metabolism</keyword>
<keyword id="KW-0444">Lipid biosynthesis</keyword>
<keyword id="KW-0443">Lipid metabolism</keyword>
<keyword id="KW-0460">Magnesium</keyword>
<keyword id="KW-0479">Metal-binding</keyword>
<keyword id="KW-0808">Transferase</keyword>
<feature type="chain" id="PRO_1000117354" description="Holo-[acyl-carrier-protein] synthase">
    <location>
        <begin position="1"/>
        <end position="131"/>
    </location>
</feature>
<feature type="binding site" evidence="1">
    <location>
        <position position="8"/>
    </location>
    <ligand>
        <name>Mg(2+)</name>
        <dbReference type="ChEBI" id="CHEBI:18420"/>
    </ligand>
</feature>
<feature type="binding site" evidence="1">
    <location>
        <position position="63"/>
    </location>
    <ligand>
        <name>Mg(2+)</name>
        <dbReference type="ChEBI" id="CHEBI:18420"/>
    </ligand>
</feature>
<reference key="1">
    <citation type="journal article" date="2008" name="PLoS ONE">
        <title>Environmental adaptation: genomic analysis of the piezotolerant and psychrotolerant deep-sea iron reducing bacterium Shewanella piezotolerans WP3.</title>
        <authorList>
            <person name="Wang F."/>
            <person name="Wang J."/>
            <person name="Jian H."/>
            <person name="Zhang B."/>
            <person name="Li S."/>
            <person name="Wang F."/>
            <person name="Zeng X."/>
            <person name="Gao L."/>
            <person name="Bartlett D.H."/>
            <person name="Yu J."/>
            <person name="Hu S."/>
            <person name="Xiao X."/>
        </authorList>
    </citation>
    <scope>NUCLEOTIDE SEQUENCE [LARGE SCALE GENOMIC DNA]</scope>
    <source>
        <strain>WP3 / JCM 13877</strain>
    </source>
</reference>
<evidence type="ECO:0000255" key="1">
    <source>
        <dbReference type="HAMAP-Rule" id="MF_00101"/>
    </source>
</evidence>
<comment type="function">
    <text evidence="1">Transfers the 4'-phosphopantetheine moiety from coenzyme A to a Ser of acyl-carrier-protein.</text>
</comment>
<comment type="catalytic activity">
    <reaction evidence="1">
        <text>apo-[ACP] + CoA = holo-[ACP] + adenosine 3',5'-bisphosphate + H(+)</text>
        <dbReference type="Rhea" id="RHEA:12068"/>
        <dbReference type="Rhea" id="RHEA-COMP:9685"/>
        <dbReference type="Rhea" id="RHEA-COMP:9690"/>
        <dbReference type="ChEBI" id="CHEBI:15378"/>
        <dbReference type="ChEBI" id="CHEBI:29999"/>
        <dbReference type="ChEBI" id="CHEBI:57287"/>
        <dbReference type="ChEBI" id="CHEBI:58343"/>
        <dbReference type="ChEBI" id="CHEBI:64479"/>
        <dbReference type="EC" id="2.7.8.7"/>
    </reaction>
</comment>
<comment type="cofactor">
    <cofactor evidence="1">
        <name>Mg(2+)</name>
        <dbReference type="ChEBI" id="CHEBI:18420"/>
    </cofactor>
</comment>
<comment type="subcellular location">
    <subcellularLocation>
        <location evidence="1">Cytoplasm</location>
    </subcellularLocation>
</comment>
<comment type="similarity">
    <text evidence="1">Belongs to the P-Pant transferase superfamily. AcpS family.</text>
</comment>
<name>ACPS_SHEPW</name>
<proteinExistence type="inferred from homology"/>